<reference key="1">
    <citation type="journal article" date="2006" name="Nat. Biotechnol.">
        <title>Genome sequence of the ubiquitous hydrocarbon-degrading marine bacterium Alcanivorax borkumensis.</title>
        <authorList>
            <person name="Schneiker S."/>
            <person name="Martins dos Santos V.A.P."/>
            <person name="Bartels D."/>
            <person name="Bekel T."/>
            <person name="Brecht M."/>
            <person name="Buhrmester J."/>
            <person name="Chernikova T.N."/>
            <person name="Denaro R."/>
            <person name="Ferrer M."/>
            <person name="Gertler C."/>
            <person name="Goesmann A."/>
            <person name="Golyshina O.V."/>
            <person name="Kaminski F."/>
            <person name="Khachane A.N."/>
            <person name="Lang S."/>
            <person name="Linke B."/>
            <person name="McHardy A.C."/>
            <person name="Meyer F."/>
            <person name="Nechitaylo T."/>
            <person name="Puehler A."/>
            <person name="Regenhardt D."/>
            <person name="Rupp O."/>
            <person name="Sabirova J.S."/>
            <person name="Selbitschka W."/>
            <person name="Yakimov M.M."/>
            <person name="Timmis K.N."/>
            <person name="Vorhoelter F.-J."/>
            <person name="Weidner S."/>
            <person name="Kaiser O."/>
            <person name="Golyshin P.N."/>
        </authorList>
    </citation>
    <scope>NUCLEOTIDE SEQUENCE [LARGE SCALE GENOMIC DNA]</scope>
    <source>
        <strain>ATCC 700651 / DSM 11573 / NCIMB 13689 / SK2</strain>
    </source>
</reference>
<comment type="function">
    <text evidence="1">Required for the formation of a threonylcarbamoyl group on adenosine at position 37 (t(6)A37) in tRNAs that read codons beginning with adenine. Is involved in the transfer of the threonylcarbamoyl moiety of threonylcarbamoyl-AMP (TC-AMP) to the N6 group of A37, together with TsaE and TsaB. TsaD likely plays a direct catalytic role in this reaction.</text>
</comment>
<comment type="catalytic activity">
    <reaction evidence="1">
        <text>L-threonylcarbamoyladenylate + adenosine(37) in tRNA = N(6)-L-threonylcarbamoyladenosine(37) in tRNA + AMP + H(+)</text>
        <dbReference type="Rhea" id="RHEA:37059"/>
        <dbReference type="Rhea" id="RHEA-COMP:10162"/>
        <dbReference type="Rhea" id="RHEA-COMP:10163"/>
        <dbReference type="ChEBI" id="CHEBI:15378"/>
        <dbReference type="ChEBI" id="CHEBI:73682"/>
        <dbReference type="ChEBI" id="CHEBI:74411"/>
        <dbReference type="ChEBI" id="CHEBI:74418"/>
        <dbReference type="ChEBI" id="CHEBI:456215"/>
        <dbReference type="EC" id="2.3.1.234"/>
    </reaction>
</comment>
<comment type="cofactor">
    <cofactor evidence="1">
        <name>Fe(2+)</name>
        <dbReference type="ChEBI" id="CHEBI:29033"/>
    </cofactor>
    <text evidence="1">Binds 1 Fe(2+) ion per subunit.</text>
</comment>
<comment type="subcellular location">
    <subcellularLocation>
        <location evidence="1">Cytoplasm</location>
    </subcellularLocation>
</comment>
<comment type="similarity">
    <text evidence="1">Belongs to the KAE1 / TsaD family.</text>
</comment>
<dbReference type="EC" id="2.3.1.234" evidence="1"/>
<dbReference type="EMBL" id="AM286690">
    <property type="protein sequence ID" value="CAL17507.1"/>
    <property type="molecule type" value="Genomic_DNA"/>
</dbReference>
<dbReference type="RefSeq" id="WP_011589338.1">
    <property type="nucleotide sequence ID" value="NC_008260.1"/>
</dbReference>
<dbReference type="SMR" id="Q0VMU1"/>
<dbReference type="STRING" id="393595.ABO_2059"/>
<dbReference type="KEGG" id="abo:ABO_2059"/>
<dbReference type="eggNOG" id="COG0533">
    <property type="taxonomic scope" value="Bacteria"/>
</dbReference>
<dbReference type="HOGENOM" id="CLU_023208_0_0_6"/>
<dbReference type="OrthoDB" id="9806197at2"/>
<dbReference type="Proteomes" id="UP000008871">
    <property type="component" value="Chromosome"/>
</dbReference>
<dbReference type="GO" id="GO:0005737">
    <property type="term" value="C:cytoplasm"/>
    <property type="evidence" value="ECO:0007669"/>
    <property type="project" value="UniProtKB-SubCell"/>
</dbReference>
<dbReference type="GO" id="GO:0005506">
    <property type="term" value="F:iron ion binding"/>
    <property type="evidence" value="ECO:0007669"/>
    <property type="project" value="UniProtKB-UniRule"/>
</dbReference>
<dbReference type="GO" id="GO:0061711">
    <property type="term" value="F:N(6)-L-threonylcarbamoyladenine synthase activity"/>
    <property type="evidence" value="ECO:0007669"/>
    <property type="project" value="UniProtKB-EC"/>
</dbReference>
<dbReference type="GO" id="GO:0002949">
    <property type="term" value="P:tRNA threonylcarbamoyladenosine modification"/>
    <property type="evidence" value="ECO:0007669"/>
    <property type="project" value="UniProtKB-UniRule"/>
</dbReference>
<dbReference type="CDD" id="cd24133">
    <property type="entry name" value="ASKHA_NBD_TsaD_bac"/>
    <property type="match status" value="1"/>
</dbReference>
<dbReference type="FunFam" id="3.30.420.40:FF:000012">
    <property type="entry name" value="tRNA N6-adenosine threonylcarbamoyltransferase"/>
    <property type="match status" value="1"/>
</dbReference>
<dbReference type="FunFam" id="3.30.420.40:FF:000031">
    <property type="entry name" value="tRNA N6-adenosine threonylcarbamoyltransferase"/>
    <property type="match status" value="1"/>
</dbReference>
<dbReference type="Gene3D" id="3.30.420.40">
    <property type="match status" value="2"/>
</dbReference>
<dbReference type="HAMAP" id="MF_01445">
    <property type="entry name" value="TsaD"/>
    <property type="match status" value="1"/>
</dbReference>
<dbReference type="InterPro" id="IPR043129">
    <property type="entry name" value="ATPase_NBD"/>
</dbReference>
<dbReference type="InterPro" id="IPR000905">
    <property type="entry name" value="Gcp-like_dom"/>
</dbReference>
<dbReference type="InterPro" id="IPR017861">
    <property type="entry name" value="KAE1/TsaD"/>
</dbReference>
<dbReference type="InterPro" id="IPR017860">
    <property type="entry name" value="Peptidase_M22_CS"/>
</dbReference>
<dbReference type="InterPro" id="IPR022450">
    <property type="entry name" value="TsaD"/>
</dbReference>
<dbReference type="NCBIfam" id="TIGR00329">
    <property type="entry name" value="gcp_kae1"/>
    <property type="match status" value="1"/>
</dbReference>
<dbReference type="NCBIfam" id="TIGR03723">
    <property type="entry name" value="T6A_TsaD_YgjD"/>
    <property type="match status" value="1"/>
</dbReference>
<dbReference type="PANTHER" id="PTHR11735">
    <property type="entry name" value="TRNA N6-ADENOSINE THREONYLCARBAMOYLTRANSFERASE"/>
    <property type="match status" value="1"/>
</dbReference>
<dbReference type="PANTHER" id="PTHR11735:SF6">
    <property type="entry name" value="TRNA N6-ADENOSINE THREONYLCARBAMOYLTRANSFERASE, MITOCHONDRIAL"/>
    <property type="match status" value="1"/>
</dbReference>
<dbReference type="Pfam" id="PF00814">
    <property type="entry name" value="TsaD"/>
    <property type="match status" value="1"/>
</dbReference>
<dbReference type="PRINTS" id="PR00789">
    <property type="entry name" value="OSIALOPTASE"/>
</dbReference>
<dbReference type="SUPFAM" id="SSF53067">
    <property type="entry name" value="Actin-like ATPase domain"/>
    <property type="match status" value="2"/>
</dbReference>
<dbReference type="PROSITE" id="PS01016">
    <property type="entry name" value="GLYCOPROTEASE"/>
    <property type="match status" value="1"/>
</dbReference>
<organism>
    <name type="scientific">Alcanivorax borkumensis (strain ATCC 700651 / DSM 11573 / NCIMB 13689 / SK2)</name>
    <dbReference type="NCBI Taxonomy" id="393595"/>
    <lineage>
        <taxon>Bacteria</taxon>
        <taxon>Pseudomonadati</taxon>
        <taxon>Pseudomonadota</taxon>
        <taxon>Gammaproteobacteria</taxon>
        <taxon>Oceanospirillales</taxon>
        <taxon>Alcanivoracaceae</taxon>
        <taxon>Alcanivorax</taxon>
    </lineage>
</organism>
<accession>Q0VMU1</accession>
<sequence length="345" mass="36828">MRVLGIESSCDETGVAIYDTEQGLLGQALYSQVEMHARYGGVVPELASRDHVQRVLPLIREVMTEANTQPQQLDGVAFTAGPGLAGALLVGAGVARSLAFGWNLPAVAVHHMEGHLLAPLLEPNAPAFPFVALLVSGGHTLLLDAKALGEYEILGESVDDAAGEAFDKAAKMMGLGYPGGPRVATLAQQGTAGRFRFPRPMTDRPGLDMSFSGLKTFTLNTINDLGGKEALSEQDRADIARAFEEAAVDTLVIKCRRAVEQTGHKRLVMAGGVSANQSLRAKLAEQMKKRGVDVYYPAPQYCTDNGAMIAFAGALRLQAGERAELPIKIRPRWPLTELAKLQGAD</sequence>
<gene>
    <name evidence="1" type="primary">tsaD</name>
    <name type="synonym">gcp</name>
    <name type="ordered locus">ABO_2059</name>
</gene>
<evidence type="ECO:0000255" key="1">
    <source>
        <dbReference type="HAMAP-Rule" id="MF_01445"/>
    </source>
</evidence>
<name>TSAD_ALCBS</name>
<feature type="chain" id="PRO_0000303250" description="tRNA N6-adenosine threonylcarbamoyltransferase">
    <location>
        <begin position="1"/>
        <end position="345"/>
    </location>
</feature>
<feature type="binding site" evidence="1">
    <location>
        <position position="111"/>
    </location>
    <ligand>
        <name>Fe cation</name>
        <dbReference type="ChEBI" id="CHEBI:24875"/>
    </ligand>
</feature>
<feature type="binding site" evidence="1">
    <location>
        <position position="115"/>
    </location>
    <ligand>
        <name>Fe cation</name>
        <dbReference type="ChEBI" id="CHEBI:24875"/>
    </ligand>
</feature>
<feature type="binding site" evidence="1">
    <location>
        <begin position="134"/>
        <end position="138"/>
    </location>
    <ligand>
        <name>substrate</name>
    </ligand>
</feature>
<feature type="binding site" evidence="1">
    <location>
        <position position="167"/>
    </location>
    <ligand>
        <name>substrate</name>
    </ligand>
</feature>
<feature type="binding site" evidence="1">
    <location>
        <position position="180"/>
    </location>
    <ligand>
        <name>substrate</name>
    </ligand>
</feature>
<feature type="binding site" evidence="1">
    <location>
        <position position="276"/>
    </location>
    <ligand>
        <name>substrate</name>
    </ligand>
</feature>
<feature type="binding site" evidence="1">
    <location>
        <position position="304"/>
    </location>
    <ligand>
        <name>Fe cation</name>
        <dbReference type="ChEBI" id="CHEBI:24875"/>
    </ligand>
</feature>
<keyword id="KW-0012">Acyltransferase</keyword>
<keyword id="KW-0963">Cytoplasm</keyword>
<keyword id="KW-0408">Iron</keyword>
<keyword id="KW-0479">Metal-binding</keyword>
<keyword id="KW-1185">Reference proteome</keyword>
<keyword id="KW-0808">Transferase</keyword>
<keyword id="KW-0819">tRNA processing</keyword>
<protein>
    <recommendedName>
        <fullName evidence="1">tRNA N6-adenosine threonylcarbamoyltransferase</fullName>
        <ecNumber evidence="1">2.3.1.234</ecNumber>
    </recommendedName>
    <alternativeName>
        <fullName evidence="1">N6-L-threonylcarbamoyladenine synthase</fullName>
        <shortName evidence="1">t(6)A synthase</shortName>
    </alternativeName>
    <alternativeName>
        <fullName evidence="1">t(6)A37 threonylcarbamoyladenosine biosynthesis protein TsaD</fullName>
    </alternativeName>
    <alternativeName>
        <fullName evidence="1">tRNA threonylcarbamoyladenosine biosynthesis protein TsaD</fullName>
    </alternativeName>
</protein>
<proteinExistence type="inferred from homology"/>